<feature type="chain" id="PRO_0000066250" description="Uncharacterized 66.3 kDa protein in hag2 5'region">
    <location>
        <begin position="1"/>
        <end position="578"/>
    </location>
</feature>
<organism>
    <name type="scientific">Eikenella corrodens</name>
    <dbReference type="NCBI Taxonomy" id="539"/>
    <lineage>
        <taxon>Bacteria</taxon>
        <taxon>Pseudomonadati</taxon>
        <taxon>Pseudomonadota</taxon>
        <taxon>Betaproteobacteria</taxon>
        <taxon>Neisseriales</taxon>
        <taxon>Neisseriaceae</taxon>
        <taxon>Eikenella</taxon>
    </lineage>
</organism>
<sequence>MSRSFCVFLELHGVGSATLGSGTQVGGITEHLSQRHFSTYFLTAGTVVVHTQYETTATVQVAHYIAHVVFRSFYFHSHNRLQQYRRGFTHTVFECHRSGQFKRNLRRVHIVVRTESQADANIYHRITGYDTILQSVADTFMHRRDEFARNHTTFNFIDKFIACTTRLHRFHFDHNVTILTFTARLFNVFSFGFHFFVDGFAVGHLRYTHISVHTELTLHAVHDNFQVQLAHTGNNGLARFFISAHTERRVFFSQTVQSDTHFLLVGLSFRLNGNVDYRLGEFHAFKDNRGIFCTQSFTVVTSFKPIAAAMSPARTSSISVRSAAVIYTKRADTLTSAFNRVQNSVARFRHARVNTDKGQLTNVFIIQHLESQSGEFLVITGLAAVGFFSIRVNTLNWRNVGRSRQQFNHGIQHTLNTFVFKCRTAQHRLDFTGKRTLTQRASDFFFRQLFTTQVLVHQLFAGFGGGFDHILTPLFGSRNQISRDIVIFESYAFIGFIPNNGFHLQQVHYAFEFTLGTNRNHDWHGIGAQTGFHLLNYAEEVGTLTVHFVYKCQARNLVFIGLAPHSFRQRQNTTYCTV</sequence>
<accession>P35649</accession>
<proteinExistence type="predicted"/>
<name>YHA2_EIKCO</name>
<protein>
    <recommendedName>
        <fullName>Uncharacterized 66.3 kDa protein in hag2 5'region</fullName>
    </recommendedName>
</protein>
<dbReference type="EMBL" id="Z12610">
    <property type="protein sequence ID" value="CAA78253.1"/>
    <property type="molecule type" value="Genomic_DNA"/>
</dbReference>
<dbReference type="PIR" id="S23847">
    <property type="entry name" value="S23847"/>
</dbReference>
<reference key="1">
    <citation type="journal article" date="1993" name="J. Gen. Microbiol.">
        <title>Cloning, characterization and sequencing of two haemagglutinin genes from Eikenella corrodens.</title>
        <authorList>
            <person name="Rao V.K."/>
            <person name="Whitlock J.A."/>
            <person name="Progulske-Fox A."/>
        </authorList>
    </citation>
    <scope>NUCLEOTIDE SEQUENCE [GENOMIC DNA]</scope>
    <source>
        <strain>ATCC 23834 / DSM 8340 / JCM 12952 / KCTC 15198 / LMG 15557 / NCTC 10596 / 333/54-55</strain>
    </source>
</reference>